<sequence>MKQLFATTSRGFEELLKVELTELGAQEAKVVQGGVHYQADDETLYRTLLWSRLASRILFPLIETKIYSDLDLYAAVSGFNWLAQFDERVTFFVDFNGTNQEIRHTQFGAMRVKDGIVDYFERQGKTRPDVDKIQPDVRIHAYLNRENLVISLDLSGEALHLRGYREDAGQAPLRETLAAAIVMRSGWQVGSPLVDPMCGSGTLLIEAAQIEAKIAPQLYRLHWGFDFWKAHNQSAWEKVKNEAIELAEEKQSEIQPHFYGFDLDHRVLKKAQKNAQNGGVSHLIKWQQADVAALKNPRLNEVGTVICNPPYGERLGTTPALIALYSVFGQRLKKEFCGWNVSVFSSESTLLDCLRMRASRQFKAKNGPLDCVQKNYQVSERKSDAITDEKELEFNRTSEVAPDFANRLQKNIKKISKWAKQQELDAYRLYDADLPEYNLAVDRYADYIVVQEYAAPKNIDENKARQRLLDAVTATLQVTGVETNKLILKVRQKQKGTNQYEKLANKGEYFYVNEYGAQLWVNLTDYLDTGLFLDHRLTRKMIGELAKGKDFLNLFAYTGSATVHAALGGAKSTTTVDMSNTYLNWAEQNLILNDIEGKQHKLIQADCLQWLEKCDRQFDLIFVDPPTFSNSKRMEESWDVQRDHVKLMSNLKRVLSNNGTIVFSNNKRGFKMNLVALEELGLSAIEISHKTLPLDFERNKQIHNCWMIQHI</sequence>
<feature type="chain" id="PRO_0000366761" description="Ribosomal RNA large subunit methyltransferase K/L">
    <location>
        <begin position="1"/>
        <end position="711"/>
    </location>
</feature>
<feature type="domain" description="THUMP" evidence="1">
    <location>
        <begin position="43"/>
        <end position="154"/>
    </location>
</feature>
<dbReference type="EC" id="2.1.1.173" evidence="1"/>
<dbReference type="EC" id="2.1.1.264" evidence="1"/>
<dbReference type="EMBL" id="CP000671">
    <property type="protein sequence ID" value="ABQ97979.1"/>
    <property type="molecule type" value="Genomic_DNA"/>
</dbReference>
<dbReference type="SMR" id="A5UB28"/>
<dbReference type="KEGG" id="hip:CGSHiEE_02695"/>
<dbReference type="HOGENOM" id="CLU_014042_2_0_6"/>
<dbReference type="GO" id="GO:0005737">
    <property type="term" value="C:cytoplasm"/>
    <property type="evidence" value="ECO:0007669"/>
    <property type="project" value="UniProtKB-SubCell"/>
</dbReference>
<dbReference type="GO" id="GO:0052915">
    <property type="term" value="F:23S rRNA (guanine(2445)-N(2))-methyltransferase activity"/>
    <property type="evidence" value="ECO:0007669"/>
    <property type="project" value="UniProtKB-UniRule"/>
</dbReference>
<dbReference type="GO" id="GO:0003723">
    <property type="term" value="F:RNA binding"/>
    <property type="evidence" value="ECO:0007669"/>
    <property type="project" value="UniProtKB-KW"/>
</dbReference>
<dbReference type="GO" id="GO:0070043">
    <property type="term" value="F:rRNA (guanine-N7-)-methyltransferase activity"/>
    <property type="evidence" value="ECO:0007669"/>
    <property type="project" value="UniProtKB-UniRule"/>
</dbReference>
<dbReference type="CDD" id="cd02440">
    <property type="entry name" value="AdoMet_MTases"/>
    <property type="match status" value="2"/>
</dbReference>
<dbReference type="CDD" id="cd11715">
    <property type="entry name" value="THUMP_AdoMetMT"/>
    <property type="match status" value="1"/>
</dbReference>
<dbReference type="FunFam" id="3.30.750.80:FF:000001">
    <property type="entry name" value="Ribosomal RNA large subunit methyltransferase K/L"/>
    <property type="match status" value="1"/>
</dbReference>
<dbReference type="FunFam" id="3.40.50.150:FF:000039">
    <property type="entry name" value="Ribosomal RNA large subunit methyltransferase K/L"/>
    <property type="match status" value="1"/>
</dbReference>
<dbReference type="Gene3D" id="3.30.2130.30">
    <property type="match status" value="1"/>
</dbReference>
<dbReference type="Gene3D" id="3.30.750.80">
    <property type="entry name" value="RNA methyltransferase domain (HRMD) like"/>
    <property type="match status" value="1"/>
</dbReference>
<dbReference type="Gene3D" id="3.40.50.150">
    <property type="entry name" value="Vaccinia Virus protein VP39"/>
    <property type="match status" value="2"/>
</dbReference>
<dbReference type="HAMAP" id="MF_01858">
    <property type="entry name" value="23SrRNA_methyltr_KL"/>
    <property type="match status" value="1"/>
</dbReference>
<dbReference type="InterPro" id="IPR017244">
    <property type="entry name" value="23SrRNA_methyltr_KL"/>
</dbReference>
<dbReference type="InterPro" id="IPR002052">
    <property type="entry name" value="DNA_methylase_N6_adenine_CS"/>
</dbReference>
<dbReference type="InterPro" id="IPR000241">
    <property type="entry name" value="RlmKL-like_Mtase"/>
</dbReference>
<dbReference type="InterPro" id="IPR053943">
    <property type="entry name" value="RlmKL-like_Mtase_CS"/>
</dbReference>
<dbReference type="InterPro" id="IPR054170">
    <property type="entry name" value="RlmL_1st"/>
</dbReference>
<dbReference type="InterPro" id="IPR019614">
    <property type="entry name" value="SAM-dep_methyl-trfase"/>
</dbReference>
<dbReference type="InterPro" id="IPR029063">
    <property type="entry name" value="SAM-dependent_MTases_sf"/>
</dbReference>
<dbReference type="InterPro" id="IPR004114">
    <property type="entry name" value="THUMP_dom"/>
</dbReference>
<dbReference type="NCBIfam" id="NF008748">
    <property type="entry name" value="PRK11783.1"/>
    <property type="match status" value="1"/>
</dbReference>
<dbReference type="PANTHER" id="PTHR47313">
    <property type="entry name" value="RIBOSOMAL RNA LARGE SUBUNIT METHYLTRANSFERASE K/L"/>
    <property type="match status" value="1"/>
</dbReference>
<dbReference type="PANTHER" id="PTHR47313:SF1">
    <property type="entry name" value="RIBOSOMAL RNA LARGE SUBUNIT METHYLTRANSFERASE K_L"/>
    <property type="match status" value="1"/>
</dbReference>
<dbReference type="Pfam" id="PF10672">
    <property type="entry name" value="Methyltrans_SAM"/>
    <property type="match status" value="1"/>
</dbReference>
<dbReference type="Pfam" id="PF22020">
    <property type="entry name" value="RlmL_1st"/>
    <property type="match status" value="1"/>
</dbReference>
<dbReference type="Pfam" id="PF02926">
    <property type="entry name" value="THUMP"/>
    <property type="match status" value="1"/>
</dbReference>
<dbReference type="Pfam" id="PF01170">
    <property type="entry name" value="UPF0020"/>
    <property type="match status" value="1"/>
</dbReference>
<dbReference type="PIRSF" id="PIRSF037618">
    <property type="entry name" value="RNA_Mtase_bacteria_prd"/>
    <property type="match status" value="1"/>
</dbReference>
<dbReference type="SMART" id="SM00981">
    <property type="entry name" value="THUMP"/>
    <property type="match status" value="1"/>
</dbReference>
<dbReference type="SUPFAM" id="SSF53335">
    <property type="entry name" value="S-adenosyl-L-methionine-dependent methyltransferases"/>
    <property type="match status" value="2"/>
</dbReference>
<dbReference type="PROSITE" id="PS51165">
    <property type="entry name" value="THUMP"/>
    <property type="match status" value="1"/>
</dbReference>
<dbReference type="PROSITE" id="PS01261">
    <property type="entry name" value="UPF0020"/>
    <property type="match status" value="1"/>
</dbReference>
<organism>
    <name type="scientific">Haemophilus influenzae (strain PittEE)</name>
    <dbReference type="NCBI Taxonomy" id="374930"/>
    <lineage>
        <taxon>Bacteria</taxon>
        <taxon>Pseudomonadati</taxon>
        <taxon>Pseudomonadota</taxon>
        <taxon>Gammaproteobacteria</taxon>
        <taxon>Pasteurellales</taxon>
        <taxon>Pasteurellaceae</taxon>
        <taxon>Haemophilus</taxon>
    </lineage>
</organism>
<gene>
    <name evidence="1" type="primary">rlmL</name>
    <name type="ordered locus">CGSHiEE_02695</name>
</gene>
<reference key="1">
    <citation type="journal article" date="2007" name="Genome Biol.">
        <title>Characterization and modeling of the Haemophilus influenzae core and supragenomes based on the complete genomic sequences of Rd and 12 clinical nontypeable strains.</title>
        <authorList>
            <person name="Hogg J.S."/>
            <person name="Hu F.Z."/>
            <person name="Janto B."/>
            <person name="Boissy R."/>
            <person name="Hayes J."/>
            <person name="Keefe R."/>
            <person name="Post J.C."/>
            <person name="Ehrlich G.D."/>
        </authorList>
    </citation>
    <scope>NUCLEOTIDE SEQUENCE [LARGE SCALE GENOMIC DNA]</scope>
    <source>
        <strain>PittEE</strain>
    </source>
</reference>
<name>RLMKL_HAEIE</name>
<evidence type="ECO:0000255" key="1">
    <source>
        <dbReference type="HAMAP-Rule" id="MF_01858"/>
    </source>
</evidence>
<keyword id="KW-0963">Cytoplasm</keyword>
<keyword id="KW-0489">Methyltransferase</keyword>
<keyword id="KW-0694">RNA-binding</keyword>
<keyword id="KW-0698">rRNA processing</keyword>
<keyword id="KW-0949">S-adenosyl-L-methionine</keyword>
<keyword id="KW-0808">Transferase</keyword>
<accession>A5UB28</accession>
<comment type="function">
    <text evidence="1">Specifically methylates the guanine in position 2445 (m2G2445) and the guanine in position 2069 (m7G2069) of 23S rRNA.</text>
</comment>
<comment type="catalytic activity">
    <reaction evidence="1">
        <text>guanosine(2445) in 23S rRNA + S-adenosyl-L-methionine = N(2)-methylguanosine(2445) in 23S rRNA + S-adenosyl-L-homocysteine + H(+)</text>
        <dbReference type="Rhea" id="RHEA:42740"/>
        <dbReference type="Rhea" id="RHEA-COMP:10215"/>
        <dbReference type="Rhea" id="RHEA-COMP:10216"/>
        <dbReference type="ChEBI" id="CHEBI:15378"/>
        <dbReference type="ChEBI" id="CHEBI:57856"/>
        <dbReference type="ChEBI" id="CHEBI:59789"/>
        <dbReference type="ChEBI" id="CHEBI:74269"/>
        <dbReference type="ChEBI" id="CHEBI:74481"/>
        <dbReference type="EC" id="2.1.1.173"/>
    </reaction>
</comment>
<comment type="catalytic activity">
    <reaction evidence="1">
        <text>guanosine(2069) in 23S rRNA + S-adenosyl-L-methionine = N(2)-methylguanosine(2069) in 23S rRNA + S-adenosyl-L-homocysteine + H(+)</text>
        <dbReference type="Rhea" id="RHEA:43772"/>
        <dbReference type="Rhea" id="RHEA-COMP:10688"/>
        <dbReference type="Rhea" id="RHEA-COMP:10689"/>
        <dbReference type="ChEBI" id="CHEBI:15378"/>
        <dbReference type="ChEBI" id="CHEBI:57856"/>
        <dbReference type="ChEBI" id="CHEBI:59789"/>
        <dbReference type="ChEBI" id="CHEBI:74269"/>
        <dbReference type="ChEBI" id="CHEBI:74481"/>
        <dbReference type="EC" id="2.1.1.264"/>
    </reaction>
</comment>
<comment type="subcellular location">
    <subcellularLocation>
        <location evidence="1">Cytoplasm</location>
    </subcellularLocation>
</comment>
<comment type="similarity">
    <text evidence="1">Belongs to the methyltransferase superfamily. RlmKL family.</text>
</comment>
<proteinExistence type="inferred from homology"/>
<protein>
    <recommendedName>
        <fullName evidence="1">Ribosomal RNA large subunit methyltransferase K/L</fullName>
    </recommendedName>
    <domain>
        <recommendedName>
            <fullName evidence="1">23S rRNA m2G2445 methyltransferase</fullName>
            <ecNumber evidence="1">2.1.1.173</ecNumber>
        </recommendedName>
        <alternativeName>
            <fullName evidence="1">rRNA (guanine-N(2)-)-methyltransferase RlmL</fullName>
        </alternativeName>
    </domain>
    <domain>
        <recommendedName>
            <fullName evidence="1">23S rRNA m7G2069 methyltransferase</fullName>
            <ecNumber evidence="1">2.1.1.264</ecNumber>
        </recommendedName>
        <alternativeName>
            <fullName evidence="1">rRNA (guanine-N(7)-)-methyltransferase RlmK</fullName>
        </alternativeName>
    </domain>
</protein>